<name>OMT16_LOPWI</name>
<comment type="function">
    <text evidence="3">O-methyltransferase participating in the biosynthesis of natural products derived from phenylethylamine, including mescaline, a natural hallucinogen potentially used in psychotherapeutic treatments (PubMed:37675639). Catalyzes the O-methylation of dopamine to produce 4-methoxytyramine (PubMed:37675639).</text>
</comment>
<comment type="catalytic activity">
    <reaction evidence="3">
        <text>dopamine + S-adenosyl-L-methionine = 4-methoxytyramine + S-adenosyl-L-homocysteine + H(+)</text>
        <dbReference type="Rhea" id="RHEA:81047"/>
        <dbReference type="ChEBI" id="CHEBI:15378"/>
        <dbReference type="ChEBI" id="CHEBI:57856"/>
        <dbReference type="ChEBI" id="CHEBI:59789"/>
        <dbReference type="ChEBI" id="CHEBI:59905"/>
        <dbReference type="ChEBI" id="CHEBI:192993"/>
    </reaction>
    <physiologicalReaction direction="left-to-right" evidence="3">
        <dbReference type="Rhea" id="RHEA:81048"/>
    </physiologicalReaction>
</comment>
<comment type="pathway">
    <text evidence="3">Aromatic compound metabolism.</text>
</comment>
<comment type="pathway">
    <text evidence="3">Alkaloid biosynthesis.</text>
</comment>
<comment type="subunit">
    <text evidence="1">Homodimer.</text>
</comment>
<comment type="tissue specificity">
    <text evidence="3">Expressed mainly in vasculature and cortex tissues at low levels.</text>
</comment>
<comment type="similarity">
    <text evidence="2">Belongs to the class I-like SAM-binding methyltransferase superfamily. Cation-independent O-methyltransferase family.</text>
</comment>
<protein>
    <recommendedName>
        <fullName evidence="4">O-methyltransferase 16</fullName>
        <shortName evidence="4">LwOMT16</shortName>
        <ecNumber evidence="2 3">2.1.1.-</ecNumber>
    </recommendedName>
</protein>
<keyword id="KW-0017">Alkaloid metabolism</keyword>
<keyword id="KW-0489">Methyltransferase</keyword>
<keyword id="KW-0949">S-adenosyl-L-methionine</keyword>
<keyword id="KW-0808">Transferase</keyword>
<proteinExistence type="evidence at protein level"/>
<feature type="chain" id="PRO_0000462564" description="O-methyltransferase 16">
    <location>
        <begin position="1"/>
        <end position="374"/>
    </location>
</feature>
<feature type="active site" description="Proton acceptor" evidence="2">
    <location>
        <position position="280"/>
    </location>
</feature>
<feature type="binding site" evidence="1">
    <location>
        <position position="195"/>
    </location>
    <ligand>
        <name>S-adenosyl-L-homocysteine</name>
        <dbReference type="ChEBI" id="CHEBI:57856"/>
    </ligand>
</feature>
<feature type="binding site" evidence="1">
    <location>
        <position position="219"/>
    </location>
    <ligand>
        <name>S-adenosyl-L-homocysteine</name>
        <dbReference type="ChEBI" id="CHEBI:57856"/>
    </ligand>
</feature>
<feature type="binding site" evidence="1">
    <location>
        <position position="242"/>
    </location>
    <ligand>
        <name>S-adenosyl-L-homocysteine</name>
        <dbReference type="ChEBI" id="CHEBI:57856"/>
    </ligand>
</feature>
<feature type="binding site" evidence="2">
    <location>
        <position position="242"/>
    </location>
    <ligand>
        <name>S-adenosyl-L-methionine</name>
        <dbReference type="ChEBI" id="CHEBI:59789"/>
    </ligand>
</feature>
<feature type="binding site" evidence="1">
    <location>
        <position position="262"/>
    </location>
    <ligand>
        <name>S-adenosyl-L-homocysteine</name>
        <dbReference type="ChEBI" id="CHEBI:57856"/>
    </ligand>
</feature>
<feature type="binding site" evidence="1">
    <location>
        <position position="276"/>
    </location>
    <ligand>
        <name>S-adenosyl-L-homocysteine</name>
        <dbReference type="ChEBI" id="CHEBI:57856"/>
    </ligand>
</feature>
<evidence type="ECO:0000250" key="1">
    <source>
        <dbReference type="UniProtKB" id="A0A166U5H3"/>
    </source>
</evidence>
<evidence type="ECO:0000255" key="2">
    <source>
        <dbReference type="PROSITE-ProRule" id="PRU01020"/>
    </source>
</evidence>
<evidence type="ECO:0000269" key="3">
    <source>
    </source>
</evidence>
<evidence type="ECO:0000303" key="4">
    <source>
    </source>
</evidence>
<evidence type="ECO:0000312" key="5">
    <source>
        <dbReference type="EMBL" id="WMX25287.1"/>
    </source>
</evidence>
<organism>
    <name type="scientific">Lophophora williamsii</name>
    <name type="common">Peyote</name>
    <name type="synonym">Echinocactus williamsii</name>
    <dbReference type="NCBI Taxonomy" id="130138"/>
    <lineage>
        <taxon>Eukaryota</taxon>
        <taxon>Viridiplantae</taxon>
        <taxon>Streptophyta</taxon>
        <taxon>Embryophyta</taxon>
        <taxon>Tracheophyta</taxon>
        <taxon>Spermatophyta</taxon>
        <taxon>Magnoliopsida</taxon>
        <taxon>eudicotyledons</taxon>
        <taxon>Gunneridae</taxon>
        <taxon>Pentapetalae</taxon>
        <taxon>Caryophyllales</taxon>
        <taxon>Cactineae</taxon>
        <taxon>Cactaceae</taxon>
        <taxon>Cactoideae</taxon>
        <taxon>Cacteae</taxon>
        <taxon>Lophophora</taxon>
    </lineage>
</organism>
<dbReference type="EC" id="2.1.1.-" evidence="2 3"/>
<dbReference type="EMBL" id="OQ831044">
    <property type="protein sequence ID" value="WMX25287.1"/>
    <property type="molecule type" value="mRNA"/>
</dbReference>
<dbReference type="GO" id="GO:0008171">
    <property type="term" value="F:O-methyltransferase activity"/>
    <property type="evidence" value="ECO:0007669"/>
    <property type="project" value="InterPro"/>
</dbReference>
<dbReference type="GO" id="GO:0046983">
    <property type="term" value="F:protein dimerization activity"/>
    <property type="evidence" value="ECO:0007669"/>
    <property type="project" value="InterPro"/>
</dbReference>
<dbReference type="GO" id="GO:0032259">
    <property type="term" value="P:methylation"/>
    <property type="evidence" value="ECO:0007669"/>
    <property type="project" value="UniProtKB-KW"/>
</dbReference>
<dbReference type="FunFam" id="1.10.10.10:FF:000357">
    <property type="entry name" value="Caffeic acid 3-O-methyltransferase"/>
    <property type="match status" value="1"/>
</dbReference>
<dbReference type="FunFam" id="3.40.50.150:FF:000061">
    <property type="entry name" value="Caffeic acid O-methyltransferase"/>
    <property type="match status" value="1"/>
</dbReference>
<dbReference type="Gene3D" id="3.40.50.150">
    <property type="entry name" value="Vaccinia Virus protein VP39"/>
    <property type="match status" value="1"/>
</dbReference>
<dbReference type="Gene3D" id="1.10.10.10">
    <property type="entry name" value="Winged helix-like DNA-binding domain superfamily/Winged helix DNA-binding domain"/>
    <property type="match status" value="1"/>
</dbReference>
<dbReference type="InterPro" id="IPR016461">
    <property type="entry name" value="COMT-like"/>
</dbReference>
<dbReference type="InterPro" id="IPR001077">
    <property type="entry name" value="O_MeTrfase_dom"/>
</dbReference>
<dbReference type="InterPro" id="IPR012967">
    <property type="entry name" value="Plant_O-MeTrfase_dimerisation"/>
</dbReference>
<dbReference type="InterPro" id="IPR029063">
    <property type="entry name" value="SAM-dependent_MTases_sf"/>
</dbReference>
<dbReference type="InterPro" id="IPR036388">
    <property type="entry name" value="WH-like_DNA-bd_sf"/>
</dbReference>
<dbReference type="InterPro" id="IPR036390">
    <property type="entry name" value="WH_DNA-bd_sf"/>
</dbReference>
<dbReference type="PANTHER" id="PTHR11746">
    <property type="entry name" value="O-METHYLTRANSFERASE"/>
    <property type="match status" value="1"/>
</dbReference>
<dbReference type="Pfam" id="PF08100">
    <property type="entry name" value="Dimerisation"/>
    <property type="match status" value="1"/>
</dbReference>
<dbReference type="Pfam" id="PF00891">
    <property type="entry name" value="Methyltransf_2"/>
    <property type="match status" value="1"/>
</dbReference>
<dbReference type="PIRSF" id="PIRSF005739">
    <property type="entry name" value="O-mtase"/>
    <property type="match status" value="1"/>
</dbReference>
<dbReference type="SUPFAM" id="SSF53335">
    <property type="entry name" value="S-adenosyl-L-methionine-dependent methyltransferases"/>
    <property type="match status" value="1"/>
</dbReference>
<dbReference type="SUPFAM" id="SSF46785">
    <property type="entry name" value="Winged helix' DNA-binding domain"/>
    <property type="match status" value="1"/>
</dbReference>
<dbReference type="PROSITE" id="PS51683">
    <property type="entry name" value="SAM_OMT_II"/>
    <property type="match status" value="1"/>
</dbReference>
<gene>
    <name evidence="4" type="primary">OMT16</name>
</gene>
<reference evidence="5" key="1">
    <citation type="journal article" date="2023" name="Plant J.">
        <title>Elucidation of the mescaline biosynthetic pathway in peyote (Lophophora williamsii).</title>
        <authorList>
            <person name="Watkins J.L."/>
            <person name="Li Q."/>
            <person name="Yeaman S."/>
            <person name="Facchini P.J."/>
        </authorList>
    </citation>
    <scope>NUCLEOTIDE SEQUENCE [MRNA]</scope>
    <scope>FUNCTION</scope>
    <scope>CATALYTIC ACTIVITY</scope>
    <scope>PATHWAY</scope>
    <scope>TISSUE SPECIFICITY</scope>
    <source>
        <strain>cv. Jourdaniana</strain>
    </source>
</reference>
<accession>A0AA51Z3S7</accession>
<sequence>MAPNNVDNPQNCVVNNTINGGVGVDDEETYGYAAQVLNSCVLPMVLNATIELGVLHLVNQAGSGPDGLSPAQLAALIQARNPDASVMLDRMLRVLATYDVVSCTAVPTEDGGFERRYGPAPVTKCFVPDEDGVSLAPMLNLVIDKVFLQSWSKLKEAVMEGGIPFNKVHGMHAFEYPAVDPRFNEIFNKAMYDQSTHIIKNILAKYKGFSQIQQLVDVGGGLGHTLRVITSKYPSIKGINFDLPHVVEHAPQIPGVEHVGGDMFESVPKGDAIFMKWILHDWSDDKCLTLLKNCYKALPENGMVIAVETNITDQPETTAYARAISQLDVSMMTQNPGGKERTRREFESLAKSAGFARVDFVCCASSFWVMEFHK</sequence>